<keyword id="KW-0963">Cytoplasm</keyword>
<keyword id="KW-0342">GTP-binding</keyword>
<keyword id="KW-0378">Hydrolase</keyword>
<keyword id="KW-0460">Magnesium</keyword>
<keyword id="KW-0479">Metal-binding</keyword>
<keyword id="KW-0547">Nucleotide-binding</keyword>
<keyword id="KW-1185">Reference proteome</keyword>
<protein>
    <recommendedName>
        <fullName evidence="1">GTPase Obg</fullName>
        <ecNumber evidence="1">3.6.5.-</ecNumber>
    </recommendedName>
    <alternativeName>
        <fullName evidence="1">GTP-binding protein Obg</fullName>
    </alternativeName>
</protein>
<comment type="function">
    <text evidence="1">An essential GTPase which binds GTP, GDP and possibly (p)ppGpp with moderate affinity, with high nucleotide exchange rates and a fairly low GTP hydrolysis rate. Plays a role in control of the cell cycle, stress response, ribosome biogenesis and in those bacteria that undergo differentiation, in morphogenesis control.</text>
</comment>
<comment type="cofactor">
    <cofactor evidence="1">
        <name>Mg(2+)</name>
        <dbReference type="ChEBI" id="CHEBI:18420"/>
    </cofactor>
</comment>
<comment type="subunit">
    <text evidence="1">Monomer.</text>
</comment>
<comment type="subcellular location">
    <subcellularLocation>
        <location evidence="1">Cytoplasm</location>
    </subcellularLocation>
</comment>
<comment type="similarity">
    <text evidence="1">Belongs to the TRAFAC class OBG-HflX-like GTPase superfamily. OBG GTPase family.</text>
</comment>
<name>OBG_XANCP</name>
<gene>
    <name evidence="1" type="primary">obg</name>
    <name type="ordered locus">XCC1151</name>
</gene>
<sequence length="350" mass="37698">MKLVDEAEILVTAGNGGNGCVGFRREKFIPLGGPDGGDGGNGGSVWIVADENVNTLVDFRHERAFKAQRGENGMGRQAYGKGGEDRVIVVPVGTVVMNVQTDEIIGDMTQHGDRLLVAKGGKGGLGNMHFKSSVNRAPRQSTTGEEGEERLLKLELKLLADVGLLGFPNAGKSTLIRAVSAATPKVADYPFTTLYPNLGVVSVEAYRSFVIADVPGLIEGAADGAGLGTQFLRHLQRTRLLLHLVDISPMDGGVDGVSPVDQVRTIERELERHDPALLEKPRWLVLNKADLMFPEEAQAAAEAIVAELGWTAPWYLVSALGRDGTFPIMKDVMAFFDRQREDELEARNAG</sequence>
<evidence type="ECO:0000255" key="1">
    <source>
        <dbReference type="HAMAP-Rule" id="MF_01454"/>
    </source>
</evidence>
<evidence type="ECO:0000255" key="2">
    <source>
        <dbReference type="PROSITE-ProRule" id="PRU01231"/>
    </source>
</evidence>
<feature type="chain" id="PRO_0000386394" description="GTPase Obg">
    <location>
        <begin position="1"/>
        <end position="350"/>
    </location>
</feature>
<feature type="domain" description="Obg" evidence="2">
    <location>
        <begin position="1"/>
        <end position="159"/>
    </location>
</feature>
<feature type="domain" description="OBG-type G" evidence="1">
    <location>
        <begin position="160"/>
        <end position="337"/>
    </location>
</feature>
<feature type="binding site" evidence="1">
    <location>
        <begin position="166"/>
        <end position="173"/>
    </location>
    <ligand>
        <name>GTP</name>
        <dbReference type="ChEBI" id="CHEBI:37565"/>
    </ligand>
</feature>
<feature type="binding site" evidence="1">
    <location>
        <position position="173"/>
    </location>
    <ligand>
        <name>Mg(2+)</name>
        <dbReference type="ChEBI" id="CHEBI:18420"/>
    </ligand>
</feature>
<feature type="binding site" evidence="1">
    <location>
        <begin position="191"/>
        <end position="195"/>
    </location>
    <ligand>
        <name>GTP</name>
        <dbReference type="ChEBI" id="CHEBI:37565"/>
    </ligand>
</feature>
<feature type="binding site" evidence="1">
    <location>
        <position position="193"/>
    </location>
    <ligand>
        <name>Mg(2+)</name>
        <dbReference type="ChEBI" id="CHEBI:18420"/>
    </ligand>
</feature>
<feature type="binding site" evidence="1">
    <location>
        <begin position="213"/>
        <end position="216"/>
    </location>
    <ligand>
        <name>GTP</name>
        <dbReference type="ChEBI" id="CHEBI:37565"/>
    </ligand>
</feature>
<feature type="binding site" evidence="1">
    <location>
        <begin position="287"/>
        <end position="290"/>
    </location>
    <ligand>
        <name>GTP</name>
        <dbReference type="ChEBI" id="CHEBI:37565"/>
    </ligand>
</feature>
<feature type="binding site" evidence="1">
    <location>
        <begin position="318"/>
        <end position="320"/>
    </location>
    <ligand>
        <name>GTP</name>
        <dbReference type="ChEBI" id="CHEBI:37565"/>
    </ligand>
</feature>
<accession>Q8PBH0</accession>
<reference key="1">
    <citation type="journal article" date="2002" name="Nature">
        <title>Comparison of the genomes of two Xanthomonas pathogens with differing host specificities.</title>
        <authorList>
            <person name="da Silva A.C.R."/>
            <person name="Ferro J.A."/>
            <person name="Reinach F.C."/>
            <person name="Farah C.S."/>
            <person name="Furlan L.R."/>
            <person name="Quaggio R.B."/>
            <person name="Monteiro-Vitorello C.B."/>
            <person name="Van Sluys M.A."/>
            <person name="Almeida N.F. Jr."/>
            <person name="Alves L.M.C."/>
            <person name="do Amaral A.M."/>
            <person name="Bertolini M.C."/>
            <person name="Camargo L.E.A."/>
            <person name="Camarotte G."/>
            <person name="Cannavan F."/>
            <person name="Cardozo J."/>
            <person name="Chambergo F."/>
            <person name="Ciapina L.P."/>
            <person name="Cicarelli R.M.B."/>
            <person name="Coutinho L.L."/>
            <person name="Cursino-Santos J.R."/>
            <person name="El-Dorry H."/>
            <person name="Faria J.B."/>
            <person name="Ferreira A.J.S."/>
            <person name="Ferreira R.C.C."/>
            <person name="Ferro M.I.T."/>
            <person name="Formighieri E.F."/>
            <person name="Franco M.C."/>
            <person name="Greggio C.C."/>
            <person name="Gruber A."/>
            <person name="Katsuyama A.M."/>
            <person name="Kishi L.T."/>
            <person name="Leite R.P."/>
            <person name="Lemos E.G.M."/>
            <person name="Lemos M.V.F."/>
            <person name="Locali E.C."/>
            <person name="Machado M.A."/>
            <person name="Madeira A.M.B.N."/>
            <person name="Martinez-Rossi N.M."/>
            <person name="Martins E.C."/>
            <person name="Meidanis J."/>
            <person name="Menck C.F.M."/>
            <person name="Miyaki C.Y."/>
            <person name="Moon D.H."/>
            <person name="Moreira L.M."/>
            <person name="Novo M.T.M."/>
            <person name="Okura V.K."/>
            <person name="Oliveira M.C."/>
            <person name="Oliveira V.R."/>
            <person name="Pereira H.A."/>
            <person name="Rossi A."/>
            <person name="Sena J.A.D."/>
            <person name="Silva C."/>
            <person name="de Souza R.F."/>
            <person name="Spinola L.A.F."/>
            <person name="Takita M.A."/>
            <person name="Tamura R.E."/>
            <person name="Teixeira E.C."/>
            <person name="Tezza R.I.D."/>
            <person name="Trindade dos Santos M."/>
            <person name="Truffi D."/>
            <person name="Tsai S.M."/>
            <person name="White F.F."/>
            <person name="Setubal J.C."/>
            <person name="Kitajima J.P."/>
        </authorList>
    </citation>
    <scope>NUCLEOTIDE SEQUENCE [LARGE SCALE GENOMIC DNA]</scope>
    <source>
        <strain>ATCC 33913 / DSM 3586 / NCPPB 528 / LMG 568 / P 25</strain>
    </source>
</reference>
<proteinExistence type="inferred from homology"/>
<dbReference type="EC" id="3.6.5.-" evidence="1"/>
<dbReference type="EMBL" id="AE008922">
    <property type="protein sequence ID" value="AAM40450.1"/>
    <property type="molecule type" value="Genomic_DNA"/>
</dbReference>
<dbReference type="RefSeq" id="NP_636526.1">
    <property type="nucleotide sequence ID" value="NC_003902.1"/>
</dbReference>
<dbReference type="SMR" id="Q8PBH0"/>
<dbReference type="STRING" id="190485.XCC1151"/>
<dbReference type="EnsemblBacteria" id="AAM40450">
    <property type="protein sequence ID" value="AAM40450"/>
    <property type="gene ID" value="XCC1151"/>
</dbReference>
<dbReference type="KEGG" id="xcc:XCC1151"/>
<dbReference type="PATRIC" id="fig|190485.4.peg.1231"/>
<dbReference type="eggNOG" id="COG0536">
    <property type="taxonomic scope" value="Bacteria"/>
</dbReference>
<dbReference type="HOGENOM" id="CLU_011747_2_0_6"/>
<dbReference type="OrthoDB" id="9807318at2"/>
<dbReference type="Proteomes" id="UP000001010">
    <property type="component" value="Chromosome"/>
</dbReference>
<dbReference type="GO" id="GO:0005737">
    <property type="term" value="C:cytoplasm"/>
    <property type="evidence" value="ECO:0007669"/>
    <property type="project" value="UniProtKB-SubCell"/>
</dbReference>
<dbReference type="GO" id="GO:0005525">
    <property type="term" value="F:GTP binding"/>
    <property type="evidence" value="ECO:0000318"/>
    <property type="project" value="GO_Central"/>
</dbReference>
<dbReference type="GO" id="GO:0003924">
    <property type="term" value="F:GTPase activity"/>
    <property type="evidence" value="ECO:0000318"/>
    <property type="project" value="GO_Central"/>
</dbReference>
<dbReference type="GO" id="GO:0000287">
    <property type="term" value="F:magnesium ion binding"/>
    <property type="evidence" value="ECO:0007669"/>
    <property type="project" value="InterPro"/>
</dbReference>
<dbReference type="GO" id="GO:0042254">
    <property type="term" value="P:ribosome biogenesis"/>
    <property type="evidence" value="ECO:0007669"/>
    <property type="project" value="UniProtKB-UniRule"/>
</dbReference>
<dbReference type="CDD" id="cd01898">
    <property type="entry name" value="Obg"/>
    <property type="match status" value="1"/>
</dbReference>
<dbReference type="FunFam" id="2.70.210.12:FF:000001">
    <property type="entry name" value="GTPase Obg"/>
    <property type="match status" value="1"/>
</dbReference>
<dbReference type="Gene3D" id="2.70.210.12">
    <property type="entry name" value="GTP1/OBG domain"/>
    <property type="match status" value="1"/>
</dbReference>
<dbReference type="Gene3D" id="3.40.50.300">
    <property type="entry name" value="P-loop containing nucleotide triphosphate hydrolases"/>
    <property type="match status" value="1"/>
</dbReference>
<dbReference type="HAMAP" id="MF_01454">
    <property type="entry name" value="GTPase_Obg"/>
    <property type="match status" value="1"/>
</dbReference>
<dbReference type="InterPro" id="IPR031167">
    <property type="entry name" value="G_OBG"/>
</dbReference>
<dbReference type="InterPro" id="IPR006073">
    <property type="entry name" value="GTP-bd"/>
</dbReference>
<dbReference type="InterPro" id="IPR014100">
    <property type="entry name" value="GTP-bd_Obg/CgtA"/>
</dbReference>
<dbReference type="InterPro" id="IPR006074">
    <property type="entry name" value="GTP1-OBG_CS"/>
</dbReference>
<dbReference type="InterPro" id="IPR006169">
    <property type="entry name" value="GTP1_OBG_dom"/>
</dbReference>
<dbReference type="InterPro" id="IPR036726">
    <property type="entry name" value="GTP1_OBG_dom_sf"/>
</dbReference>
<dbReference type="InterPro" id="IPR045086">
    <property type="entry name" value="OBG_GTPase"/>
</dbReference>
<dbReference type="InterPro" id="IPR027417">
    <property type="entry name" value="P-loop_NTPase"/>
</dbReference>
<dbReference type="NCBIfam" id="TIGR02729">
    <property type="entry name" value="Obg_CgtA"/>
    <property type="match status" value="1"/>
</dbReference>
<dbReference type="NCBIfam" id="NF008955">
    <property type="entry name" value="PRK12297.1"/>
    <property type="match status" value="1"/>
</dbReference>
<dbReference type="NCBIfam" id="NF008956">
    <property type="entry name" value="PRK12299.1"/>
    <property type="match status" value="1"/>
</dbReference>
<dbReference type="PANTHER" id="PTHR11702">
    <property type="entry name" value="DEVELOPMENTALLY REGULATED GTP-BINDING PROTEIN-RELATED"/>
    <property type="match status" value="1"/>
</dbReference>
<dbReference type="PANTHER" id="PTHR11702:SF31">
    <property type="entry name" value="MITOCHONDRIAL RIBOSOME-ASSOCIATED GTPASE 2"/>
    <property type="match status" value="1"/>
</dbReference>
<dbReference type="Pfam" id="PF01018">
    <property type="entry name" value="GTP1_OBG"/>
    <property type="match status" value="1"/>
</dbReference>
<dbReference type="Pfam" id="PF01926">
    <property type="entry name" value="MMR_HSR1"/>
    <property type="match status" value="1"/>
</dbReference>
<dbReference type="PIRSF" id="PIRSF002401">
    <property type="entry name" value="GTP_bd_Obg/CgtA"/>
    <property type="match status" value="1"/>
</dbReference>
<dbReference type="PRINTS" id="PR00326">
    <property type="entry name" value="GTP1OBG"/>
</dbReference>
<dbReference type="SUPFAM" id="SSF82051">
    <property type="entry name" value="Obg GTP-binding protein N-terminal domain"/>
    <property type="match status" value="1"/>
</dbReference>
<dbReference type="SUPFAM" id="SSF52540">
    <property type="entry name" value="P-loop containing nucleoside triphosphate hydrolases"/>
    <property type="match status" value="1"/>
</dbReference>
<dbReference type="PROSITE" id="PS51710">
    <property type="entry name" value="G_OBG"/>
    <property type="match status" value="1"/>
</dbReference>
<dbReference type="PROSITE" id="PS00905">
    <property type="entry name" value="GTP1_OBG"/>
    <property type="match status" value="1"/>
</dbReference>
<dbReference type="PROSITE" id="PS51883">
    <property type="entry name" value="OBG"/>
    <property type="match status" value="1"/>
</dbReference>
<organism>
    <name type="scientific">Xanthomonas campestris pv. campestris (strain ATCC 33913 / DSM 3586 / NCPPB 528 / LMG 568 / P 25)</name>
    <dbReference type="NCBI Taxonomy" id="190485"/>
    <lineage>
        <taxon>Bacteria</taxon>
        <taxon>Pseudomonadati</taxon>
        <taxon>Pseudomonadota</taxon>
        <taxon>Gammaproteobacteria</taxon>
        <taxon>Lysobacterales</taxon>
        <taxon>Lysobacteraceae</taxon>
        <taxon>Xanthomonas</taxon>
    </lineage>
</organism>